<comment type="function">
    <text evidence="1">Catalyzes the phosphorylation of methylthioribose into methylthioribose-1-phosphate.</text>
</comment>
<comment type="catalytic activity">
    <reaction evidence="1">
        <text>5-(methylsulfanyl)-D-ribose + ATP = 5-(methylsulfanyl)-alpha-D-ribose 1-phosphate + ADP + H(+)</text>
        <dbReference type="Rhea" id="RHEA:22312"/>
        <dbReference type="ChEBI" id="CHEBI:15378"/>
        <dbReference type="ChEBI" id="CHEBI:30616"/>
        <dbReference type="ChEBI" id="CHEBI:58533"/>
        <dbReference type="ChEBI" id="CHEBI:78440"/>
        <dbReference type="ChEBI" id="CHEBI:456216"/>
        <dbReference type="EC" id="2.7.1.100"/>
    </reaction>
</comment>
<comment type="pathway">
    <text evidence="1">Amino-acid biosynthesis; L-methionine biosynthesis via salvage pathway; S-methyl-5-thio-alpha-D-ribose 1-phosphate from S-methyl-5'-thioadenosine (hydrolase route): step 2/2.</text>
</comment>
<comment type="subunit">
    <text evidence="1">Homodimer.</text>
</comment>
<comment type="similarity">
    <text evidence="1">Belongs to the methylthioribose kinase family.</text>
</comment>
<keyword id="KW-0028">Amino-acid biosynthesis</keyword>
<keyword id="KW-0067">ATP-binding</keyword>
<keyword id="KW-0418">Kinase</keyword>
<keyword id="KW-0486">Methionine biosynthesis</keyword>
<keyword id="KW-0547">Nucleotide-binding</keyword>
<keyword id="KW-0808">Transferase</keyword>
<dbReference type="EC" id="2.7.1.100" evidence="1"/>
<dbReference type="EMBL" id="CP000903">
    <property type="protein sequence ID" value="ABY45030.1"/>
    <property type="molecule type" value="Genomic_DNA"/>
</dbReference>
<dbReference type="RefSeq" id="WP_002190558.1">
    <property type="nucleotide sequence ID" value="NC_010184.1"/>
</dbReference>
<dbReference type="SMR" id="A9VFD6"/>
<dbReference type="KEGG" id="bwe:BcerKBAB4_3862"/>
<dbReference type="eggNOG" id="COG4857">
    <property type="taxonomic scope" value="Bacteria"/>
</dbReference>
<dbReference type="HOGENOM" id="CLU_033681_0_0_9"/>
<dbReference type="UniPathway" id="UPA00904">
    <property type="reaction ID" value="UER00872"/>
</dbReference>
<dbReference type="Proteomes" id="UP000002154">
    <property type="component" value="Chromosome"/>
</dbReference>
<dbReference type="GO" id="GO:0005524">
    <property type="term" value="F:ATP binding"/>
    <property type="evidence" value="ECO:0007669"/>
    <property type="project" value="UniProtKB-UniRule"/>
</dbReference>
<dbReference type="GO" id="GO:0046522">
    <property type="term" value="F:S-methyl-5-thioribose kinase activity"/>
    <property type="evidence" value="ECO:0007669"/>
    <property type="project" value="UniProtKB-UniRule"/>
</dbReference>
<dbReference type="GO" id="GO:0019509">
    <property type="term" value="P:L-methionine salvage from methylthioadenosine"/>
    <property type="evidence" value="ECO:0007669"/>
    <property type="project" value="UniProtKB-UniRule"/>
</dbReference>
<dbReference type="FunFam" id="3.30.200.20:FF:000436">
    <property type="entry name" value="Methylthioribose kinase"/>
    <property type="match status" value="1"/>
</dbReference>
<dbReference type="FunFam" id="3.90.1200.10:FF:000008">
    <property type="entry name" value="Methylthioribose kinase"/>
    <property type="match status" value="1"/>
</dbReference>
<dbReference type="Gene3D" id="3.90.1200.10">
    <property type="match status" value="1"/>
</dbReference>
<dbReference type="Gene3D" id="3.30.200.20">
    <property type="entry name" value="Phosphorylase Kinase, domain 1"/>
    <property type="match status" value="1"/>
</dbReference>
<dbReference type="HAMAP" id="MF_01683">
    <property type="entry name" value="Salvage_MtnK"/>
    <property type="match status" value="1"/>
</dbReference>
<dbReference type="InterPro" id="IPR002575">
    <property type="entry name" value="Aminoglycoside_PTrfase"/>
</dbReference>
<dbReference type="InterPro" id="IPR011009">
    <property type="entry name" value="Kinase-like_dom_sf"/>
</dbReference>
<dbReference type="InterPro" id="IPR009212">
    <property type="entry name" value="Methylthioribose_kinase"/>
</dbReference>
<dbReference type="NCBIfam" id="TIGR01767">
    <property type="entry name" value="MTRK"/>
    <property type="match status" value="1"/>
</dbReference>
<dbReference type="PANTHER" id="PTHR34273">
    <property type="entry name" value="METHYLTHIORIBOSE KINASE"/>
    <property type="match status" value="1"/>
</dbReference>
<dbReference type="PANTHER" id="PTHR34273:SF2">
    <property type="entry name" value="METHYLTHIORIBOSE KINASE"/>
    <property type="match status" value="1"/>
</dbReference>
<dbReference type="Pfam" id="PF01636">
    <property type="entry name" value="APH"/>
    <property type="match status" value="1"/>
</dbReference>
<dbReference type="PIRSF" id="PIRSF031134">
    <property type="entry name" value="MTRK"/>
    <property type="match status" value="1"/>
</dbReference>
<dbReference type="SUPFAM" id="SSF56112">
    <property type="entry name" value="Protein kinase-like (PK-like)"/>
    <property type="match status" value="1"/>
</dbReference>
<sequence length="392" mass="44518">MGYYSLTETTAIQYAKEHGYFEKKANVVCHEIGDGNLNYVFKLDDGEKSIIIKQALPYAKVVGESWPLSIKRATIESKALQIFAKYVPDYVPVVYSHDEELAVTVIEDLSRLTITRKGLIDGEGYPLLSQHIGRFLAHVLFYTSDFGLQSEEKRVLEGTFVNPDLSKITEDLVFTDPFGHYDTNDYESDLQSVIDELWSDKTLKLKVAQYKYKFLTRKEALIHGDLHTGSIFSSPSETKVIDPEFATYGPFGFDIGQFIANLLLNALSREEEKRSVLFFHIEKTWSYFVENFTKLWIGEGVEAYTKEKQWLPIILQNIFTDAVGFAGCELIRRTIGLAHVADLDGIANKENRIQAKKQALSLGRELIKYEAKCADIQLFRTLFQQTVGGVKA</sequence>
<gene>
    <name evidence="1" type="primary">mtnK</name>
    <name type="ordered locus">BcerKBAB4_3862</name>
</gene>
<accession>A9VFD6</accession>
<proteinExistence type="inferred from homology"/>
<protein>
    <recommendedName>
        <fullName evidence="1">Methylthioribose kinase</fullName>
        <shortName evidence="1">MTR kinase</shortName>
        <ecNumber evidence="1">2.7.1.100</ecNumber>
    </recommendedName>
</protein>
<evidence type="ECO:0000255" key="1">
    <source>
        <dbReference type="HAMAP-Rule" id="MF_01683"/>
    </source>
</evidence>
<reference key="1">
    <citation type="journal article" date="2008" name="Chem. Biol. Interact.">
        <title>Extending the Bacillus cereus group genomics to putative food-borne pathogens of different toxicity.</title>
        <authorList>
            <person name="Lapidus A."/>
            <person name="Goltsman E."/>
            <person name="Auger S."/>
            <person name="Galleron N."/>
            <person name="Segurens B."/>
            <person name="Dossat C."/>
            <person name="Land M.L."/>
            <person name="Broussolle V."/>
            <person name="Brillard J."/>
            <person name="Guinebretiere M.-H."/>
            <person name="Sanchis V."/>
            <person name="Nguen-the C."/>
            <person name="Lereclus D."/>
            <person name="Richardson P."/>
            <person name="Wincker P."/>
            <person name="Weissenbach J."/>
            <person name="Ehrlich S.D."/>
            <person name="Sorokin A."/>
        </authorList>
    </citation>
    <scope>NUCLEOTIDE SEQUENCE [LARGE SCALE GENOMIC DNA]</scope>
    <source>
        <strain>KBAB4</strain>
    </source>
</reference>
<feature type="chain" id="PRO_0000357337" description="Methylthioribose kinase">
    <location>
        <begin position="1"/>
        <end position="392"/>
    </location>
</feature>
<feature type="binding site" evidence="1">
    <location>
        <position position="38"/>
    </location>
    <ligand>
        <name>ATP</name>
        <dbReference type="ChEBI" id="CHEBI:30616"/>
    </ligand>
</feature>
<feature type="binding site" evidence="1">
    <location>
        <position position="53"/>
    </location>
    <ligand>
        <name>ATP</name>
        <dbReference type="ChEBI" id="CHEBI:30616"/>
    </ligand>
</feature>
<feature type="binding site" evidence="1">
    <location>
        <begin position="107"/>
        <end position="109"/>
    </location>
    <ligand>
        <name>ATP</name>
        <dbReference type="ChEBI" id="CHEBI:30616"/>
    </ligand>
</feature>
<feature type="binding site" evidence="1">
    <location>
        <position position="225"/>
    </location>
    <ligand>
        <name>substrate</name>
    </ligand>
</feature>
<feature type="binding site" evidence="1">
    <location>
        <begin position="242"/>
        <end position="244"/>
    </location>
    <ligand>
        <name>ATP</name>
        <dbReference type="ChEBI" id="CHEBI:30616"/>
    </ligand>
</feature>
<feature type="binding site" evidence="1">
    <location>
        <position position="332"/>
    </location>
    <ligand>
        <name>substrate</name>
    </ligand>
</feature>
<organism>
    <name type="scientific">Bacillus mycoides (strain KBAB4)</name>
    <name type="common">Bacillus weihenstephanensis</name>
    <dbReference type="NCBI Taxonomy" id="315730"/>
    <lineage>
        <taxon>Bacteria</taxon>
        <taxon>Bacillati</taxon>
        <taxon>Bacillota</taxon>
        <taxon>Bacilli</taxon>
        <taxon>Bacillales</taxon>
        <taxon>Bacillaceae</taxon>
        <taxon>Bacillus</taxon>
        <taxon>Bacillus cereus group</taxon>
    </lineage>
</organism>
<name>MTNK_BACMK</name>